<comment type="function">
    <text evidence="1">Catalyzes the phosphorylation of the 3'-hydroxyl group of dephosphocoenzyme A to form coenzyme A.</text>
</comment>
<comment type="catalytic activity">
    <reaction evidence="1">
        <text>3'-dephospho-CoA + ATP = ADP + CoA + H(+)</text>
        <dbReference type="Rhea" id="RHEA:18245"/>
        <dbReference type="ChEBI" id="CHEBI:15378"/>
        <dbReference type="ChEBI" id="CHEBI:30616"/>
        <dbReference type="ChEBI" id="CHEBI:57287"/>
        <dbReference type="ChEBI" id="CHEBI:57328"/>
        <dbReference type="ChEBI" id="CHEBI:456216"/>
        <dbReference type="EC" id="2.7.1.24"/>
    </reaction>
</comment>
<comment type="pathway">
    <text evidence="1">Cofactor biosynthesis; coenzyme A biosynthesis; CoA from (R)-pantothenate: step 5/5.</text>
</comment>
<comment type="subcellular location">
    <subcellularLocation>
        <location evidence="1">Cytoplasm</location>
    </subcellularLocation>
</comment>
<comment type="similarity">
    <text evidence="1">Belongs to the CoaE family.</text>
</comment>
<sequence>MLVLGLTGSIGMGKSTTAKLFAEAGVPVYDADATVHKIYENEAVPAIEAAFPGTTLGGKVDRALLSAKVVHDPAAMKRLEGIVHPMLRAHHQQFLDDAESSGAPVAVVDVPLLFETGGEKRVDAVVVVTTSPEVQRERILARDNMTPEKLDAILARQMPDAEKRKRADFVVDTSNGLDPVRLQIREILEAAAKMPRRRD</sequence>
<name>COAE_RHOPA</name>
<gene>
    <name evidence="1" type="primary">coaE</name>
    <name type="ordered locus">RPA0300</name>
</gene>
<dbReference type="EC" id="2.7.1.24" evidence="1"/>
<dbReference type="EMBL" id="BX572593">
    <property type="protein sequence ID" value="CAE25744.1"/>
    <property type="molecule type" value="Genomic_DNA"/>
</dbReference>
<dbReference type="RefSeq" id="WP_011155868.1">
    <property type="nucleotide sequence ID" value="NZ_CP116810.1"/>
</dbReference>
<dbReference type="SMR" id="Q6ND09"/>
<dbReference type="STRING" id="258594.RPA0300"/>
<dbReference type="GeneID" id="66891310"/>
<dbReference type="eggNOG" id="COG0237">
    <property type="taxonomic scope" value="Bacteria"/>
</dbReference>
<dbReference type="HOGENOM" id="CLU_057180_3_0_5"/>
<dbReference type="PhylomeDB" id="Q6ND09"/>
<dbReference type="UniPathway" id="UPA00241">
    <property type="reaction ID" value="UER00356"/>
</dbReference>
<dbReference type="GO" id="GO:0005737">
    <property type="term" value="C:cytoplasm"/>
    <property type="evidence" value="ECO:0007669"/>
    <property type="project" value="UniProtKB-SubCell"/>
</dbReference>
<dbReference type="GO" id="GO:0005524">
    <property type="term" value="F:ATP binding"/>
    <property type="evidence" value="ECO:0007669"/>
    <property type="project" value="UniProtKB-UniRule"/>
</dbReference>
<dbReference type="GO" id="GO:0004140">
    <property type="term" value="F:dephospho-CoA kinase activity"/>
    <property type="evidence" value="ECO:0007669"/>
    <property type="project" value="UniProtKB-UniRule"/>
</dbReference>
<dbReference type="GO" id="GO:0015937">
    <property type="term" value="P:coenzyme A biosynthetic process"/>
    <property type="evidence" value="ECO:0007669"/>
    <property type="project" value="UniProtKB-UniRule"/>
</dbReference>
<dbReference type="CDD" id="cd02022">
    <property type="entry name" value="DPCK"/>
    <property type="match status" value="1"/>
</dbReference>
<dbReference type="Gene3D" id="3.40.50.300">
    <property type="entry name" value="P-loop containing nucleotide triphosphate hydrolases"/>
    <property type="match status" value="1"/>
</dbReference>
<dbReference type="HAMAP" id="MF_00376">
    <property type="entry name" value="Dephospho_CoA_kinase"/>
    <property type="match status" value="1"/>
</dbReference>
<dbReference type="InterPro" id="IPR001977">
    <property type="entry name" value="Depp_CoAkinase"/>
</dbReference>
<dbReference type="InterPro" id="IPR027417">
    <property type="entry name" value="P-loop_NTPase"/>
</dbReference>
<dbReference type="NCBIfam" id="TIGR00152">
    <property type="entry name" value="dephospho-CoA kinase"/>
    <property type="match status" value="1"/>
</dbReference>
<dbReference type="PANTHER" id="PTHR10695:SF46">
    <property type="entry name" value="BIFUNCTIONAL COENZYME A SYNTHASE-RELATED"/>
    <property type="match status" value="1"/>
</dbReference>
<dbReference type="PANTHER" id="PTHR10695">
    <property type="entry name" value="DEPHOSPHO-COA KINASE-RELATED"/>
    <property type="match status" value="1"/>
</dbReference>
<dbReference type="Pfam" id="PF01121">
    <property type="entry name" value="CoaE"/>
    <property type="match status" value="1"/>
</dbReference>
<dbReference type="SUPFAM" id="SSF52540">
    <property type="entry name" value="P-loop containing nucleoside triphosphate hydrolases"/>
    <property type="match status" value="1"/>
</dbReference>
<dbReference type="PROSITE" id="PS51219">
    <property type="entry name" value="DPCK"/>
    <property type="match status" value="1"/>
</dbReference>
<keyword id="KW-0067">ATP-binding</keyword>
<keyword id="KW-0173">Coenzyme A biosynthesis</keyword>
<keyword id="KW-0963">Cytoplasm</keyword>
<keyword id="KW-0418">Kinase</keyword>
<keyword id="KW-0547">Nucleotide-binding</keyword>
<keyword id="KW-0808">Transferase</keyword>
<evidence type="ECO:0000255" key="1">
    <source>
        <dbReference type="HAMAP-Rule" id="MF_00376"/>
    </source>
</evidence>
<accession>Q6ND09</accession>
<protein>
    <recommendedName>
        <fullName evidence="1">Dephospho-CoA kinase</fullName>
        <ecNumber evidence="1">2.7.1.24</ecNumber>
    </recommendedName>
    <alternativeName>
        <fullName evidence="1">Dephosphocoenzyme A kinase</fullName>
    </alternativeName>
</protein>
<proteinExistence type="inferred from homology"/>
<reference key="1">
    <citation type="journal article" date="2004" name="Nat. Biotechnol.">
        <title>Complete genome sequence of the metabolically versatile photosynthetic bacterium Rhodopseudomonas palustris.</title>
        <authorList>
            <person name="Larimer F.W."/>
            <person name="Chain P."/>
            <person name="Hauser L."/>
            <person name="Lamerdin J.E."/>
            <person name="Malfatti S."/>
            <person name="Do L."/>
            <person name="Land M.L."/>
            <person name="Pelletier D.A."/>
            <person name="Beatty J.T."/>
            <person name="Lang A.S."/>
            <person name="Tabita F.R."/>
            <person name="Gibson J.L."/>
            <person name="Hanson T.E."/>
            <person name="Bobst C."/>
            <person name="Torres y Torres J.L."/>
            <person name="Peres C."/>
            <person name="Harrison F.H."/>
            <person name="Gibson J."/>
            <person name="Harwood C.S."/>
        </authorList>
    </citation>
    <scope>NUCLEOTIDE SEQUENCE [LARGE SCALE GENOMIC DNA]</scope>
    <source>
        <strain>ATCC BAA-98 / CGA009</strain>
    </source>
</reference>
<organism>
    <name type="scientific">Rhodopseudomonas palustris (strain ATCC BAA-98 / CGA009)</name>
    <dbReference type="NCBI Taxonomy" id="258594"/>
    <lineage>
        <taxon>Bacteria</taxon>
        <taxon>Pseudomonadati</taxon>
        <taxon>Pseudomonadota</taxon>
        <taxon>Alphaproteobacteria</taxon>
        <taxon>Hyphomicrobiales</taxon>
        <taxon>Nitrobacteraceae</taxon>
        <taxon>Rhodopseudomonas</taxon>
    </lineage>
</organism>
<feature type="chain" id="PRO_0000172990" description="Dephospho-CoA kinase">
    <location>
        <begin position="1"/>
        <end position="199"/>
    </location>
</feature>
<feature type="domain" description="DPCK" evidence="1">
    <location>
        <begin position="3"/>
        <end position="199"/>
    </location>
</feature>
<feature type="binding site" evidence="1">
    <location>
        <begin position="11"/>
        <end position="16"/>
    </location>
    <ligand>
        <name>ATP</name>
        <dbReference type="ChEBI" id="CHEBI:30616"/>
    </ligand>
</feature>